<gene>
    <name evidence="1" type="primary">atpB</name>
</gene>
<sequence>MKINPTTSVPGVSTLEKENLGRISQIIGPVLDVAFPPGKMPNIYNALVVKGQDTAGQQINVTCEVQQLLGNNRVRAVAMSATDGLTRGMEVIDTGTALSVPVGGATLGRIFNVLGEPVDNLGPVDTRTTSPIHKSAPAFIQLDTKLSIFETGIKVVDLLAPYRRGGKIGLFGGAGVGKTVLIMELINNIAKAHGGVSVFGGVGERTREGNDLYMEMKESGVINEQNLAESKVALVYGQMNEPPGARMRVGLTALTMAEYFRDVNEQDVLLFIDNIFRFVQAGSEVSALLGRMPSAVGYQPTLSTEMGTLQERITSTKEGSITSIQAVYVPADDLTDPAPATTFAHLDATTVLSRGLAAKGIYPAVDPLDSTSTMLQPRIVGEEHYETAQRVKQTLQRYNELQDIIAILGLDELSEEDRLTVARARKIERFLSQPFFVAEVFTGSPGKYVGLAETIRGFKLILSGELDGLPEQAFYLVGNIDEATAKATNLEMESKLKK</sequence>
<keyword id="KW-0066">ATP synthesis</keyword>
<keyword id="KW-0067">ATP-binding</keyword>
<keyword id="KW-0139">CF(1)</keyword>
<keyword id="KW-0150">Chloroplast</keyword>
<keyword id="KW-0375">Hydrogen ion transport</keyword>
<keyword id="KW-0406">Ion transport</keyword>
<keyword id="KW-0472">Membrane</keyword>
<keyword id="KW-0547">Nucleotide-binding</keyword>
<keyword id="KW-0934">Plastid</keyword>
<keyword id="KW-0793">Thylakoid</keyword>
<keyword id="KW-1278">Translocase</keyword>
<keyword id="KW-0813">Transport</keyword>
<name>ATPB_GOSBA</name>
<geneLocation type="chloroplast"/>
<evidence type="ECO:0000255" key="1">
    <source>
        <dbReference type="HAMAP-Rule" id="MF_01347"/>
    </source>
</evidence>
<dbReference type="EC" id="7.1.2.2" evidence="1"/>
<dbReference type="EMBL" id="AP009123">
    <property type="protein sequence ID" value="BAF41254.1"/>
    <property type="molecule type" value="Genomic_DNA"/>
</dbReference>
<dbReference type="RefSeq" id="YP_913194.1">
    <property type="nucleotide sequence ID" value="NC_008641.1"/>
</dbReference>
<dbReference type="SMR" id="A0ZZ42"/>
<dbReference type="GeneID" id="4575185"/>
<dbReference type="GO" id="GO:0009535">
    <property type="term" value="C:chloroplast thylakoid membrane"/>
    <property type="evidence" value="ECO:0007669"/>
    <property type="project" value="UniProtKB-SubCell"/>
</dbReference>
<dbReference type="GO" id="GO:0005739">
    <property type="term" value="C:mitochondrion"/>
    <property type="evidence" value="ECO:0007669"/>
    <property type="project" value="GOC"/>
</dbReference>
<dbReference type="GO" id="GO:0045259">
    <property type="term" value="C:proton-transporting ATP synthase complex"/>
    <property type="evidence" value="ECO:0007669"/>
    <property type="project" value="UniProtKB-KW"/>
</dbReference>
<dbReference type="GO" id="GO:0005524">
    <property type="term" value="F:ATP binding"/>
    <property type="evidence" value="ECO:0007669"/>
    <property type="project" value="UniProtKB-UniRule"/>
</dbReference>
<dbReference type="GO" id="GO:0016887">
    <property type="term" value="F:ATP hydrolysis activity"/>
    <property type="evidence" value="ECO:0007669"/>
    <property type="project" value="InterPro"/>
</dbReference>
<dbReference type="GO" id="GO:0046933">
    <property type="term" value="F:proton-transporting ATP synthase activity, rotational mechanism"/>
    <property type="evidence" value="ECO:0007669"/>
    <property type="project" value="UniProtKB-UniRule"/>
</dbReference>
<dbReference type="GO" id="GO:0042776">
    <property type="term" value="P:proton motive force-driven mitochondrial ATP synthesis"/>
    <property type="evidence" value="ECO:0007669"/>
    <property type="project" value="TreeGrafter"/>
</dbReference>
<dbReference type="CDD" id="cd18110">
    <property type="entry name" value="ATP-synt_F1_beta_C"/>
    <property type="match status" value="1"/>
</dbReference>
<dbReference type="CDD" id="cd18115">
    <property type="entry name" value="ATP-synt_F1_beta_N"/>
    <property type="match status" value="1"/>
</dbReference>
<dbReference type="CDD" id="cd01133">
    <property type="entry name" value="F1-ATPase_beta_CD"/>
    <property type="match status" value="1"/>
</dbReference>
<dbReference type="FunFam" id="1.10.1140.10:FF:000001">
    <property type="entry name" value="ATP synthase subunit beta"/>
    <property type="match status" value="1"/>
</dbReference>
<dbReference type="FunFam" id="3.40.50.12240:FF:000006">
    <property type="entry name" value="ATP synthase subunit beta"/>
    <property type="match status" value="1"/>
</dbReference>
<dbReference type="FunFam" id="3.40.50.300:FF:000004">
    <property type="entry name" value="ATP synthase subunit beta"/>
    <property type="match status" value="1"/>
</dbReference>
<dbReference type="FunFam" id="2.40.10.170:FF:000002">
    <property type="entry name" value="ATP synthase subunit beta, chloroplastic"/>
    <property type="match status" value="1"/>
</dbReference>
<dbReference type="Gene3D" id="2.40.10.170">
    <property type="match status" value="1"/>
</dbReference>
<dbReference type="Gene3D" id="1.10.1140.10">
    <property type="entry name" value="Bovine Mitochondrial F1-atpase, Atp Synthase Beta Chain, Chain D, domain 3"/>
    <property type="match status" value="1"/>
</dbReference>
<dbReference type="Gene3D" id="3.40.50.300">
    <property type="entry name" value="P-loop containing nucleotide triphosphate hydrolases"/>
    <property type="match status" value="1"/>
</dbReference>
<dbReference type="HAMAP" id="MF_01347">
    <property type="entry name" value="ATP_synth_beta_bact"/>
    <property type="match status" value="1"/>
</dbReference>
<dbReference type="InterPro" id="IPR003593">
    <property type="entry name" value="AAA+_ATPase"/>
</dbReference>
<dbReference type="InterPro" id="IPR055190">
    <property type="entry name" value="ATP-synt_VA_C"/>
</dbReference>
<dbReference type="InterPro" id="IPR005722">
    <property type="entry name" value="ATP_synth_F1_bsu"/>
</dbReference>
<dbReference type="InterPro" id="IPR020003">
    <property type="entry name" value="ATPase_a/bsu_AS"/>
</dbReference>
<dbReference type="InterPro" id="IPR050053">
    <property type="entry name" value="ATPase_alpha/beta_chains"/>
</dbReference>
<dbReference type="InterPro" id="IPR004100">
    <property type="entry name" value="ATPase_F1/V1/A1_a/bsu_N"/>
</dbReference>
<dbReference type="InterPro" id="IPR036121">
    <property type="entry name" value="ATPase_F1/V1/A1_a/bsu_N_sf"/>
</dbReference>
<dbReference type="InterPro" id="IPR000194">
    <property type="entry name" value="ATPase_F1/V1/A1_a/bsu_nucl-bd"/>
</dbReference>
<dbReference type="InterPro" id="IPR024034">
    <property type="entry name" value="ATPase_F1/V1_b/a_C"/>
</dbReference>
<dbReference type="InterPro" id="IPR027417">
    <property type="entry name" value="P-loop_NTPase"/>
</dbReference>
<dbReference type="NCBIfam" id="TIGR01039">
    <property type="entry name" value="atpD"/>
    <property type="match status" value="1"/>
</dbReference>
<dbReference type="PANTHER" id="PTHR15184">
    <property type="entry name" value="ATP SYNTHASE"/>
    <property type="match status" value="1"/>
</dbReference>
<dbReference type="PANTHER" id="PTHR15184:SF71">
    <property type="entry name" value="ATP SYNTHASE SUBUNIT BETA, MITOCHONDRIAL"/>
    <property type="match status" value="1"/>
</dbReference>
<dbReference type="Pfam" id="PF00006">
    <property type="entry name" value="ATP-synt_ab"/>
    <property type="match status" value="1"/>
</dbReference>
<dbReference type="Pfam" id="PF02874">
    <property type="entry name" value="ATP-synt_ab_N"/>
    <property type="match status" value="1"/>
</dbReference>
<dbReference type="Pfam" id="PF22919">
    <property type="entry name" value="ATP-synt_VA_C"/>
    <property type="match status" value="1"/>
</dbReference>
<dbReference type="SMART" id="SM00382">
    <property type="entry name" value="AAA"/>
    <property type="match status" value="1"/>
</dbReference>
<dbReference type="SUPFAM" id="SSF47917">
    <property type="entry name" value="C-terminal domain of alpha and beta subunits of F1 ATP synthase"/>
    <property type="match status" value="1"/>
</dbReference>
<dbReference type="SUPFAM" id="SSF50615">
    <property type="entry name" value="N-terminal domain of alpha and beta subunits of F1 ATP synthase"/>
    <property type="match status" value="1"/>
</dbReference>
<dbReference type="SUPFAM" id="SSF52540">
    <property type="entry name" value="P-loop containing nucleoside triphosphate hydrolases"/>
    <property type="match status" value="1"/>
</dbReference>
<dbReference type="PROSITE" id="PS00152">
    <property type="entry name" value="ATPASE_ALPHA_BETA"/>
    <property type="match status" value="1"/>
</dbReference>
<protein>
    <recommendedName>
        <fullName evidence="1">ATP synthase subunit beta, chloroplastic</fullName>
        <ecNumber evidence="1">7.1.2.2</ecNumber>
    </recommendedName>
    <alternativeName>
        <fullName evidence="1">ATP synthase F1 sector subunit beta</fullName>
    </alternativeName>
    <alternativeName>
        <fullName evidence="1">F-ATPase subunit beta</fullName>
    </alternativeName>
</protein>
<proteinExistence type="inferred from homology"/>
<reference key="1">
    <citation type="journal article" date="2006" name="Genes Genet. Syst.">
        <title>Complete nucleotide sequence of the cotton (Gossypium barbadense L.) chloroplast genome with a comparative analysis of sequences among 9 dicot plants.</title>
        <authorList>
            <person name="Ibrahim R.I.H."/>
            <person name="Azuma J."/>
            <person name="Sakamoto M."/>
        </authorList>
    </citation>
    <scope>NUCLEOTIDE SEQUENCE [LARGE SCALE GENOMIC DNA]</scope>
</reference>
<feature type="chain" id="PRO_0000275182" description="ATP synthase subunit beta, chloroplastic">
    <location>
        <begin position="1"/>
        <end position="498"/>
    </location>
</feature>
<feature type="binding site" evidence="1">
    <location>
        <begin position="172"/>
        <end position="179"/>
    </location>
    <ligand>
        <name>ATP</name>
        <dbReference type="ChEBI" id="CHEBI:30616"/>
    </ligand>
</feature>
<comment type="function">
    <text evidence="1">Produces ATP from ADP in the presence of a proton gradient across the membrane. The catalytic sites are hosted primarily by the beta subunits.</text>
</comment>
<comment type="catalytic activity">
    <reaction evidence="1">
        <text>ATP + H2O + 4 H(+)(in) = ADP + phosphate + 5 H(+)(out)</text>
        <dbReference type="Rhea" id="RHEA:57720"/>
        <dbReference type="ChEBI" id="CHEBI:15377"/>
        <dbReference type="ChEBI" id="CHEBI:15378"/>
        <dbReference type="ChEBI" id="CHEBI:30616"/>
        <dbReference type="ChEBI" id="CHEBI:43474"/>
        <dbReference type="ChEBI" id="CHEBI:456216"/>
        <dbReference type="EC" id="7.1.2.2"/>
    </reaction>
</comment>
<comment type="subunit">
    <text evidence="1">F-type ATPases have 2 components, CF(1) - the catalytic core - and CF(0) - the membrane proton channel. CF(1) has five subunits: alpha(3), beta(3), gamma(1), delta(1), epsilon(1). CF(0) has four main subunits: a(1), b(1), b'(1) and c(9-12).</text>
</comment>
<comment type="subcellular location">
    <subcellularLocation>
        <location evidence="1">Plastid</location>
        <location evidence="1">Chloroplast thylakoid membrane</location>
        <topology evidence="1">Peripheral membrane protein</topology>
    </subcellularLocation>
</comment>
<comment type="similarity">
    <text evidence="1">Belongs to the ATPase alpha/beta chains family.</text>
</comment>
<accession>A0ZZ42</accession>
<organism>
    <name type="scientific">Gossypium barbadense</name>
    <name type="common">Sea Island cotton</name>
    <name type="synonym">Hibiscus barbadensis</name>
    <dbReference type="NCBI Taxonomy" id="3634"/>
    <lineage>
        <taxon>Eukaryota</taxon>
        <taxon>Viridiplantae</taxon>
        <taxon>Streptophyta</taxon>
        <taxon>Embryophyta</taxon>
        <taxon>Tracheophyta</taxon>
        <taxon>Spermatophyta</taxon>
        <taxon>Magnoliopsida</taxon>
        <taxon>eudicotyledons</taxon>
        <taxon>Gunneridae</taxon>
        <taxon>Pentapetalae</taxon>
        <taxon>rosids</taxon>
        <taxon>malvids</taxon>
        <taxon>Malvales</taxon>
        <taxon>Malvaceae</taxon>
        <taxon>Malvoideae</taxon>
        <taxon>Gossypium</taxon>
    </lineage>
</organism>